<sequence length="419" mass="46511">MAYLFTSESVSEGHPDKIADQISDALLDNFLAFDGESKVACETMVTTGQVVLAGEVRSNTYLDVQNIARDVINDIGYTKGAYKFSGDSCGVISLIHEQSQDIYQGVDRGNKEEQGAGDQGMMFGYATNETENYMPLALDISHKILIELAKLRREGKEIEYLRPDSKSQVTIEYSDENVPERIVAIVVSTQHDDFDADDEKMLTKIKKDIIEILIPRVKKQLPEYVQKLFNDDIVYHINPTGKFVIGGPHGDAGLTGRKIIVDTYGGKGAHGGGAFSGKDPSKVDRSAAYASRHIAKNLVAAGVAPEILVQVSYAIGVVEPTSISVYTYGKNNTDLSDGQIAEKVKEIFDMRPSSIEDRLKLRNPIYRETAAYGHMGKEPRKVTKIFESPYKGKITREVELFTWEKLDYVDKVKDAFELN</sequence>
<feature type="chain" id="PRO_0000302919" description="S-adenosylmethionine synthase">
    <location>
        <begin position="1"/>
        <end position="419"/>
    </location>
</feature>
<feature type="region of interest" description="Flexible loop" evidence="1">
    <location>
        <begin position="98"/>
        <end position="108"/>
    </location>
</feature>
<feature type="binding site" description="in other chain" evidence="1">
    <location>
        <position position="14"/>
    </location>
    <ligand>
        <name>ATP</name>
        <dbReference type="ChEBI" id="CHEBI:30616"/>
        <note>ligand shared between two neighboring subunits</note>
    </ligand>
</feature>
<feature type="binding site" evidence="1">
    <location>
        <position position="16"/>
    </location>
    <ligand>
        <name>Mg(2+)</name>
        <dbReference type="ChEBI" id="CHEBI:18420"/>
    </ligand>
</feature>
<feature type="binding site" evidence="1">
    <location>
        <position position="42"/>
    </location>
    <ligand>
        <name>K(+)</name>
        <dbReference type="ChEBI" id="CHEBI:29103"/>
    </ligand>
</feature>
<feature type="binding site" description="in other chain" evidence="1">
    <location>
        <position position="55"/>
    </location>
    <ligand>
        <name>L-methionine</name>
        <dbReference type="ChEBI" id="CHEBI:57844"/>
        <note>ligand shared between two neighboring subunits</note>
    </ligand>
</feature>
<feature type="binding site" description="in other chain" evidence="1">
    <location>
        <position position="98"/>
    </location>
    <ligand>
        <name>L-methionine</name>
        <dbReference type="ChEBI" id="CHEBI:57844"/>
        <note>ligand shared between two neighboring subunits</note>
    </ligand>
</feature>
<feature type="binding site" description="in other chain" evidence="1">
    <location>
        <begin position="164"/>
        <end position="166"/>
    </location>
    <ligand>
        <name>ATP</name>
        <dbReference type="ChEBI" id="CHEBI:30616"/>
        <note>ligand shared between two neighboring subunits</note>
    </ligand>
</feature>
<feature type="binding site" description="in other chain" evidence="1">
    <location>
        <begin position="242"/>
        <end position="243"/>
    </location>
    <ligand>
        <name>ATP</name>
        <dbReference type="ChEBI" id="CHEBI:30616"/>
        <note>ligand shared between two neighboring subunits</note>
    </ligand>
</feature>
<feature type="binding site" evidence="1">
    <location>
        <position position="251"/>
    </location>
    <ligand>
        <name>ATP</name>
        <dbReference type="ChEBI" id="CHEBI:30616"/>
        <note>ligand shared between two neighboring subunits</note>
    </ligand>
</feature>
<feature type="binding site" evidence="1">
    <location>
        <position position="251"/>
    </location>
    <ligand>
        <name>L-methionine</name>
        <dbReference type="ChEBI" id="CHEBI:57844"/>
        <note>ligand shared between two neighboring subunits</note>
    </ligand>
</feature>
<feature type="binding site" description="in other chain" evidence="1">
    <location>
        <begin position="257"/>
        <end position="258"/>
    </location>
    <ligand>
        <name>ATP</name>
        <dbReference type="ChEBI" id="CHEBI:30616"/>
        <note>ligand shared between two neighboring subunits</note>
    </ligand>
</feature>
<feature type="binding site" evidence="1">
    <location>
        <position position="274"/>
    </location>
    <ligand>
        <name>ATP</name>
        <dbReference type="ChEBI" id="CHEBI:30616"/>
        <note>ligand shared between two neighboring subunits</note>
    </ligand>
</feature>
<feature type="binding site" evidence="1">
    <location>
        <position position="278"/>
    </location>
    <ligand>
        <name>ATP</name>
        <dbReference type="ChEBI" id="CHEBI:30616"/>
        <note>ligand shared between two neighboring subunits</note>
    </ligand>
</feature>
<feature type="binding site" description="in other chain" evidence="1">
    <location>
        <position position="282"/>
    </location>
    <ligand>
        <name>L-methionine</name>
        <dbReference type="ChEBI" id="CHEBI:57844"/>
        <note>ligand shared between two neighboring subunits</note>
    </ligand>
</feature>
<organism>
    <name type="scientific">Christiangramia forsetii (strain DSM 17595 / CGMCC 1.15422 / KT0803)</name>
    <name type="common">Gramella forsetii</name>
    <dbReference type="NCBI Taxonomy" id="411154"/>
    <lineage>
        <taxon>Bacteria</taxon>
        <taxon>Pseudomonadati</taxon>
        <taxon>Bacteroidota</taxon>
        <taxon>Flavobacteriia</taxon>
        <taxon>Flavobacteriales</taxon>
        <taxon>Flavobacteriaceae</taxon>
        <taxon>Christiangramia</taxon>
    </lineage>
</organism>
<gene>
    <name evidence="1" type="primary">metK</name>
    <name type="ordered locus">GFO_0314</name>
</gene>
<reference key="1">
    <citation type="journal article" date="2006" name="Environ. Microbiol.">
        <title>Whole genome analysis of the marine Bacteroidetes'Gramella forsetii' reveals adaptations to degradation of polymeric organic matter.</title>
        <authorList>
            <person name="Bauer M."/>
            <person name="Kube M."/>
            <person name="Teeling H."/>
            <person name="Richter M."/>
            <person name="Lombardot T."/>
            <person name="Allers E."/>
            <person name="Wuerdemann C.A."/>
            <person name="Quast C."/>
            <person name="Kuhl H."/>
            <person name="Knaust F."/>
            <person name="Woebken D."/>
            <person name="Bischof K."/>
            <person name="Mussmann M."/>
            <person name="Choudhuri J.V."/>
            <person name="Meyer F."/>
            <person name="Reinhardt R."/>
            <person name="Amann R.I."/>
            <person name="Gloeckner F.O."/>
        </authorList>
    </citation>
    <scope>NUCLEOTIDE SEQUENCE [LARGE SCALE GENOMIC DNA]</scope>
    <source>
        <strain>DSM 17595 / CGMCC 1.15422 / KT0803</strain>
    </source>
</reference>
<proteinExistence type="inferred from homology"/>
<dbReference type="EC" id="2.5.1.6" evidence="1"/>
<dbReference type="EMBL" id="CU207366">
    <property type="protein sequence ID" value="CAL65300.1"/>
    <property type="molecule type" value="Genomic_DNA"/>
</dbReference>
<dbReference type="RefSeq" id="WP_011708238.1">
    <property type="nucleotide sequence ID" value="NC_008571.1"/>
</dbReference>
<dbReference type="SMR" id="A0LY55"/>
<dbReference type="STRING" id="411154.GFO_0314"/>
<dbReference type="KEGG" id="gfo:GFO_0314"/>
<dbReference type="eggNOG" id="COG0192">
    <property type="taxonomic scope" value="Bacteria"/>
</dbReference>
<dbReference type="HOGENOM" id="CLU_041802_1_1_10"/>
<dbReference type="OrthoDB" id="9801686at2"/>
<dbReference type="UniPathway" id="UPA00315">
    <property type="reaction ID" value="UER00080"/>
</dbReference>
<dbReference type="Proteomes" id="UP000000755">
    <property type="component" value="Chromosome"/>
</dbReference>
<dbReference type="GO" id="GO:0005737">
    <property type="term" value="C:cytoplasm"/>
    <property type="evidence" value="ECO:0007669"/>
    <property type="project" value="UniProtKB-SubCell"/>
</dbReference>
<dbReference type="GO" id="GO:0005524">
    <property type="term" value="F:ATP binding"/>
    <property type="evidence" value="ECO:0007669"/>
    <property type="project" value="UniProtKB-UniRule"/>
</dbReference>
<dbReference type="GO" id="GO:0000287">
    <property type="term" value="F:magnesium ion binding"/>
    <property type="evidence" value="ECO:0007669"/>
    <property type="project" value="UniProtKB-UniRule"/>
</dbReference>
<dbReference type="GO" id="GO:0004478">
    <property type="term" value="F:methionine adenosyltransferase activity"/>
    <property type="evidence" value="ECO:0007669"/>
    <property type="project" value="UniProtKB-UniRule"/>
</dbReference>
<dbReference type="GO" id="GO:0006730">
    <property type="term" value="P:one-carbon metabolic process"/>
    <property type="evidence" value="ECO:0007669"/>
    <property type="project" value="UniProtKB-KW"/>
</dbReference>
<dbReference type="GO" id="GO:0006556">
    <property type="term" value="P:S-adenosylmethionine biosynthetic process"/>
    <property type="evidence" value="ECO:0007669"/>
    <property type="project" value="UniProtKB-UniRule"/>
</dbReference>
<dbReference type="CDD" id="cd18079">
    <property type="entry name" value="S-AdoMet_synt"/>
    <property type="match status" value="1"/>
</dbReference>
<dbReference type="FunFam" id="3.30.300.10:FF:000020">
    <property type="entry name" value="S-adenosylmethionine synthase"/>
    <property type="match status" value="1"/>
</dbReference>
<dbReference type="Gene3D" id="3.30.300.10">
    <property type="match status" value="3"/>
</dbReference>
<dbReference type="HAMAP" id="MF_00086">
    <property type="entry name" value="S_AdoMet_synth1"/>
    <property type="match status" value="1"/>
</dbReference>
<dbReference type="InterPro" id="IPR022631">
    <property type="entry name" value="ADOMET_SYNTHASE_CS"/>
</dbReference>
<dbReference type="InterPro" id="IPR022630">
    <property type="entry name" value="S-AdoMet_synt_C"/>
</dbReference>
<dbReference type="InterPro" id="IPR022629">
    <property type="entry name" value="S-AdoMet_synt_central"/>
</dbReference>
<dbReference type="InterPro" id="IPR022628">
    <property type="entry name" value="S-AdoMet_synt_N"/>
</dbReference>
<dbReference type="InterPro" id="IPR002133">
    <property type="entry name" value="S-AdoMet_synthetase"/>
</dbReference>
<dbReference type="InterPro" id="IPR022636">
    <property type="entry name" value="S-AdoMet_synthetase_sfam"/>
</dbReference>
<dbReference type="NCBIfam" id="TIGR01034">
    <property type="entry name" value="metK"/>
    <property type="match status" value="1"/>
</dbReference>
<dbReference type="PANTHER" id="PTHR11964">
    <property type="entry name" value="S-ADENOSYLMETHIONINE SYNTHETASE"/>
    <property type="match status" value="1"/>
</dbReference>
<dbReference type="Pfam" id="PF02773">
    <property type="entry name" value="S-AdoMet_synt_C"/>
    <property type="match status" value="1"/>
</dbReference>
<dbReference type="Pfam" id="PF02772">
    <property type="entry name" value="S-AdoMet_synt_M"/>
    <property type="match status" value="1"/>
</dbReference>
<dbReference type="Pfam" id="PF00438">
    <property type="entry name" value="S-AdoMet_synt_N"/>
    <property type="match status" value="1"/>
</dbReference>
<dbReference type="PIRSF" id="PIRSF000497">
    <property type="entry name" value="MAT"/>
    <property type="match status" value="1"/>
</dbReference>
<dbReference type="SUPFAM" id="SSF55973">
    <property type="entry name" value="S-adenosylmethionine synthetase"/>
    <property type="match status" value="3"/>
</dbReference>
<dbReference type="PROSITE" id="PS00376">
    <property type="entry name" value="ADOMET_SYNTHASE_1"/>
    <property type="match status" value="1"/>
</dbReference>
<dbReference type="PROSITE" id="PS00377">
    <property type="entry name" value="ADOMET_SYNTHASE_2"/>
    <property type="match status" value="1"/>
</dbReference>
<evidence type="ECO:0000255" key="1">
    <source>
        <dbReference type="HAMAP-Rule" id="MF_00086"/>
    </source>
</evidence>
<accession>A0LY55</accession>
<comment type="function">
    <text evidence="1">Catalyzes the formation of S-adenosylmethionine (AdoMet) from methionine and ATP. The overall synthetic reaction is composed of two sequential steps, AdoMet formation and the subsequent tripolyphosphate hydrolysis which occurs prior to release of AdoMet from the enzyme.</text>
</comment>
<comment type="catalytic activity">
    <reaction evidence="1">
        <text>L-methionine + ATP + H2O = S-adenosyl-L-methionine + phosphate + diphosphate</text>
        <dbReference type="Rhea" id="RHEA:21080"/>
        <dbReference type="ChEBI" id="CHEBI:15377"/>
        <dbReference type="ChEBI" id="CHEBI:30616"/>
        <dbReference type="ChEBI" id="CHEBI:33019"/>
        <dbReference type="ChEBI" id="CHEBI:43474"/>
        <dbReference type="ChEBI" id="CHEBI:57844"/>
        <dbReference type="ChEBI" id="CHEBI:59789"/>
        <dbReference type="EC" id="2.5.1.6"/>
    </reaction>
</comment>
<comment type="cofactor">
    <cofactor evidence="1">
        <name>Mg(2+)</name>
        <dbReference type="ChEBI" id="CHEBI:18420"/>
    </cofactor>
    <text evidence="1">Binds 2 divalent ions per subunit.</text>
</comment>
<comment type="cofactor">
    <cofactor evidence="1">
        <name>K(+)</name>
        <dbReference type="ChEBI" id="CHEBI:29103"/>
    </cofactor>
    <text evidence="1">Binds 1 potassium ion per subunit.</text>
</comment>
<comment type="pathway">
    <text evidence="1">Amino-acid biosynthesis; S-adenosyl-L-methionine biosynthesis; S-adenosyl-L-methionine from L-methionine: step 1/1.</text>
</comment>
<comment type="subunit">
    <text evidence="1">Homotetramer; dimer of dimers.</text>
</comment>
<comment type="subcellular location">
    <subcellularLocation>
        <location evidence="1">Cytoplasm</location>
    </subcellularLocation>
</comment>
<comment type="similarity">
    <text evidence="1">Belongs to the AdoMet synthase family.</text>
</comment>
<keyword id="KW-0067">ATP-binding</keyword>
<keyword id="KW-0963">Cytoplasm</keyword>
<keyword id="KW-0460">Magnesium</keyword>
<keyword id="KW-0479">Metal-binding</keyword>
<keyword id="KW-0547">Nucleotide-binding</keyword>
<keyword id="KW-0554">One-carbon metabolism</keyword>
<keyword id="KW-0630">Potassium</keyword>
<keyword id="KW-0808">Transferase</keyword>
<protein>
    <recommendedName>
        <fullName evidence="1">S-adenosylmethionine synthase</fullName>
        <shortName evidence="1">AdoMet synthase</shortName>
        <ecNumber evidence="1">2.5.1.6</ecNumber>
    </recommendedName>
    <alternativeName>
        <fullName evidence="1">MAT</fullName>
    </alternativeName>
    <alternativeName>
        <fullName evidence="1">Methionine adenosyltransferase</fullName>
    </alternativeName>
</protein>
<name>METK_CHRFK</name>